<sequence length="39" mass="4089">MNSTGRIPLWLVVTFGGIVVLTVLGIFIYGSYSGLGSSL</sequence>
<evidence type="ECO:0000255" key="1">
    <source>
        <dbReference type="HAMAP-Rule" id="MF_01305"/>
    </source>
</evidence>
<evidence type="ECO:0000305" key="2"/>
<gene>
    <name evidence="1" type="primary">psbJ</name>
</gene>
<name>PSBJ_CYACA</name>
<geneLocation type="chloroplast"/>
<proteinExistence type="evidence at protein level"/>
<reference key="1">
    <citation type="journal article" date="2000" name="J. Mol. Evol.">
        <title>The structure and gene repertoire of an ancient red algal plastid genome.</title>
        <authorList>
            <person name="Gloeckner G."/>
            <person name="Rosenthal A."/>
            <person name="Valentin K.-U."/>
        </authorList>
    </citation>
    <scope>NUCLEOTIDE SEQUENCE [LARGE SCALE GENOMIC DNA]</scope>
    <source>
        <strain>RK-1</strain>
    </source>
</reference>
<dbReference type="EMBL" id="AF022186">
    <property type="protein sequence ID" value="AAF13002.1"/>
    <property type="molecule type" value="Genomic_DNA"/>
</dbReference>
<dbReference type="RefSeq" id="NP_045044.1">
    <property type="nucleotide sequence ID" value="NC_001840.1"/>
</dbReference>
<dbReference type="PDB" id="4YUU">
    <property type="method" value="X-ray"/>
    <property type="resolution" value="2.77 A"/>
    <property type="chains" value="J1/J2/j1/j2=1-39"/>
</dbReference>
<dbReference type="PDBsum" id="4YUU"/>
<dbReference type="SMR" id="Q9TM23"/>
<dbReference type="GeneID" id="800183"/>
<dbReference type="GO" id="GO:0009535">
    <property type="term" value="C:chloroplast thylakoid membrane"/>
    <property type="evidence" value="ECO:0007669"/>
    <property type="project" value="UniProtKB-SubCell"/>
</dbReference>
<dbReference type="GO" id="GO:0009539">
    <property type="term" value="C:photosystem II reaction center"/>
    <property type="evidence" value="ECO:0007669"/>
    <property type="project" value="InterPro"/>
</dbReference>
<dbReference type="GO" id="GO:0015979">
    <property type="term" value="P:photosynthesis"/>
    <property type="evidence" value="ECO:0007669"/>
    <property type="project" value="UniProtKB-UniRule"/>
</dbReference>
<dbReference type="Gene3D" id="6.10.250.2070">
    <property type="match status" value="1"/>
</dbReference>
<dbReference type="HAMAP" id="MF_01305">
    <property type="entry name" value="PSII_PsbJ"/>
    <property type="match status" value="1"/>
</dbReference>
<dbReference type="InterPro" id="IPR002682">
    <property type="entry name" value="PSII_PsbJ"/>
</dbReference>
<dbReference type="InterPro" id="IPR037267">
    <property type="entry name" value="PSII_PsbJ_sf"/>
</dbReference>
<dbReference type="NCBIfam" id="NF002722">
    <property type="entry name" value="PRK02565.1"/>
    <property type="match status" value="1"/>
</dbReference>
<dbReference type="PANTHER" id="PTHR34812">
    <property type="entry name" value="PHOTOSYSTEM II REACTION CENTER PROTEIN J"/>
    <property type="match status" value="1"/>
</dbReference>
<dbReference type="PANTHER" id="PTHR34812:SF3">
    <property type="entry name" value="PHOTOSYSTEM II REACTION CENTER PROTEIN J"/>
    <property type="match status" value="1"/>
</dbReference>
<dbReference type="Pfam" id="PF01788">
    <property type="entry name" value="PsbJ"/>
    <property type="match status" value="1"/>
</dbReference>
<dbReference type="SUPFAM" id="SSF161021">
    <property type="entry name" value="Photosystem II reaction center protein J, PsbJ"/>
    <property type="match status" value="1"/>
</dbReference>
<feature type="chain" id="PRO_0000216586" description="Photosystem II reaction center protein J">
    <location>
        <begin position="1"/>
        <end position="39"/>
    </location>
</feature>
<feature type="transmembrane region" description="Helical" evidence="1">
    <location>
        <begin position="9"/>
        <end position="29"/>
    </location>
</feature>
<keyword id="KW-0002">3D-structure</keyword>
<keyword id="KW-0150">Chloroplast</keyword>
<keyword id="KW-0472">Membrane</keyword>
<keyword id="KW-0602">Photosynthesis</keyword>
<keyword id="KW-0604">Photosystem II</keyword>
<keyword id="KW-0934">Plastid</keyword>
<keyword id="KW-0674">Reaction center</keyword>
<keyword id="KW-0793">Thylakoid</keyword>
<keyword id="KW-0812">Transmembrane</keyword>
<keyword id="KW-1133">Transmembrane helix</keyword>
<protein>
    <recommendedName>
        <fullName evidence="1">Photosystem II reaction center protein J</fullName>
        <shortName evidence="1">PSII-J</shortName>
    </recommendedName>
</protein>
<comment type="function">
    <text evidence="1">One of the components of the core complex of photosystem II (PSII). PSII is a light-driven water:plastoquinone oxidoreductase that uses light energy to abstract electrons from H(2)O, generating O(2) and a proton gradient subsequently used for ATP formation. It consists of a core antenna complex that captures photons, and an electron transfer chain that converts photonic excitation into a charge separation.</text>
</comment>
<comment type="subunit">
    <text evidence="2">PSII is composed of 1 copy each of membrane proteins PsbA, PsbB, PsbC, PsbD, PsbE, PsbF, PsbH, PsbI, PsbJ, PsbK, PsbL, PsbM, PsbT, PsbY, PsbZ, Psb30/Ycf12, at least 3 peripheral proteins of the oxygen-evolving complex and a large number of cofactors. It forms dimeric complexes.</text>
</comment>
<comment type="subcellular location">
    <subcellularLocation>
        <location evidence="1">Plastid</location>
        <location evidence="1">Chloroplast thylakoid membrane</location>
        <topology evidence="1">Single-pass membrane protein</topology>
    </subcellularLocation>
</comment>
<comment type="similarity">
    <text evidence="1">Belongs to the PsbJ family.</text>
</comment>
<accession>Q9TM23</accession>
<organism>
    <name type="scientific">Cyanidium caldarium</name>
    <name type="common">Red alga</name>
    <dbReference type="NCBI Taxonomy" id="2771"/>
    <lineage>
        <taxon>Eukaryota</taxon>
        <taxon>Rhodophyta</taxon>
        <taxon>Bangiophyceae</taxon>
        <taxon>Cyanidiales</taxon>
        <taxon>Cyanidiaceae</taxon>
        <taxon>Cyanidium</taxon>
    </lineage>
</organism>